<comment type="function">
    <text evidence="1">Required for growth and/or survival at acidic conditions.</text>
</comment>
<comment type="subcellular location">
    <subcellularLocation>
        <location evidence="1">Periplasm</location>
    </subcellularLocation>
</comment>
<comment type="PTM">
    <text evidence="1">Proteolytic processing gives rise to the active protein.</text>
</comment>
<comment type="similarity">
    <text evidence="1">Belongs to the Asr family.</text>
</comment>
<accession>A7FFL9</accession>
<keyword id="KW-0574">Periplasm</keyword>
<keyword id="KW-0732">Signal</keyword>
<sequence length="121" mass="12550">MKKVLALMVAATLGLSSVAFAADTTATATPAATSTTATVAAQTKATQHQKHKVTKKTTEQKAQAAKKHEKKASVQKAPVQKAQAAKKHVKKASVQKAPVQKAQAAKKHHKTAKKPVAAPAA</sequence>
<name>ASR_YERP3</name>
<organism>
    <name type="scientific">Yersinia pseudotuberculosis serotype O:1b (strain IP 31758)</name>
    <dbReference type="NCBI Taxonomy" id="349747"/>
    <lineage>
        <taxon>Bacteria</taxon>
        <taxon>Pseudomonadati</taxon>
        <taxon>Pseudomonadota</taxon>
        <taxon>Gammaproteobacteria</taxon>
        <taxon>Enterobacterales</taxon>
        <taxon>Yersiniaceae</taxon>
        <taxon>Yersinia</taxon>
    </lineage>
</organism>
<reference key="1">
    <citation type="journal article" date="2007" name="PLoS Genet.">
        <title>The complete genome sequence of Yersinia pseudotuberculosis IP31758, the causative agent of Far East scarlet-like fever.</title>
        <authorList>
            <person name="Eppinger M."/>
            <person name="Rosovitz M.J."/>
            <person name="Fricke W.F."/>
            <person name="Rasko D.A."/>
            <person name="Kokorina G."/>
            <person name="Fayolle C."/>
            <person name="Lindler L.E."/>
            <person name="Carniel E."/>
            <person name="Ravel J."/>
        </authorList>
    </citation>
    <scope>NUCLEOTIDE SEQUENCE [LARGE SCALE GENOMIC DNA]</scope>
    <source>
        <strain>IP 31758</strain>
    </source>
</reference>
<proteinExistence type="inferred from homology"/>
<dbReference type="EMBL" id="CP000720">
    <property type="protein sequence ID" value="ABS48899.1"/>
    <property type="molecule type" value="Genomic_DNA"/>
</dbReference>
<dbReference type="RefSeq" id="WP_011192847.1">
    <property type="nucleotide sequence ID" value="NC_009708.1"/>
</dbReference>
<dbReference type="GeneID" id="49785034"/>
<dbReference type="KEGG" id="ypi:YpsIP31758_1066"/>
<dbReference type="HOGENOM" id="CLU_102486_1_0_6"/>
<dbReference type="Proteomes" id="UP000002412">
    <property type="component" value="Chromosome"/>
</dbReference>
<dbReference type="GO" id="GO:0042597">
    <property type="term" value="C:periplasmic space"/>
    <property type="evidence" value="ECO:0007669"/>
    <property type="project" value="UniProtKB-SubCell"/>
</dbReference>
<dbReference type="HAMAP" id="MF_00546">
    <property type="entry name" value="Asr"/>
    <property type="match status" value="1"/>
</dbReference>
<dbReference type="InterPro" id="IPR023497">
    <property type="entry name" value="Acid_shock"/>
</dbReference>
<dbReference type="NCBIfam" id="NF033636">
    <property type="entry name" value="acid_shock_Asr"/>
    <property type="match status" value="1"/>
</dbReference>
<dbReference type="Pfam" id="PF06392">
    <property type="entry name" value="Asr"/>
    <property type="match status" value="1"/>
</dbReference>
<protein>
    <recommendedName>
        <fullName evidence="1">Acid shock protein</fullName>
    </recommendedName>
</protein>
<gene>
    <name evidence="1" type="primary">asr</name>
    <name type="ordered locus">YpsIP31758_1066</name>
</gene>
<evidence type="ECO:0000255" key="1">
    <source>
        <dbReference type="HAMAP-Rule" id="MF_00546"/>
    </source>
</evidence>
<evidence type="ECO:0000256" key="2">
    <source>
        <dbReference type="SAM" id="MobiDB-lite"/>
    </source>
</evidence>
<feature type="signal peptide" evidence="1">
    <location>
        <begin position="1"/>
        <end position="21"/>
    </location>
</feature>
<feature type="propeptide" id="PRO_1000061078" evidence="1">
    <location>
        <begin position="22"/>
        <end position="63"/>
    </location>
</feature>
<feature type="chain" id="PRO_1000061079" description="Acid shock protein">
    <location>
        <begin position="64"/>
        <end position="121"/>
    </location>
</feature>
<feature type="region of interest" description="Disordered" evidence="2">
    <location>
        <begin position="40"/>
        <end position="121"/>
    </location>
</feature>
<feature type="compositionally biased region" description="Low complexity" evidence="2">
    <location>
        <begin position="74"/>
        <end position="83"/>
    </location>
</feature>
<feature type="compositionally biased region" description="Basic residues" evidence="2">
    <location>
        <begin position="84"/>
        <end position="93"/>
    </location>
</feature>
<feature type="compositionally biased region" description="Low complexity" evidence="2">
    <location>
        <begin position="94"/>
        <end position="103"/>
    </location>
</feature>
<feature type="compositionally biased region" description="Basic residues" evidence="2">
    <location>
        <begin position="104"/>
        <end position="113"/>
    </location>
</feature>